<evidence type="ECO:0000250" key="1"/>
<evidence type="ECO:0000250" key="2">
    <source>
        <dbReference type="UniProtKB" id="P12004"/>
    </source>
</evidence>
<evidence type="ECO:0000255" key="3"/>
<evidence type="ECO:0000269" key="4">
    <source>
    </source>
</evidence>
<evidence type="ECO:0000269" key="5">
    <source>
    </source>
</evidence>
<evidence type="ECO:0000269" key="6">
    <source>
    </source>
</evidence>
<evidence type="ECO:0000269" key="7">
    <source>
    </source>
</evidence>
<evidence type="ECO:0000305" key="8"/>
<gene>
    <name type="primary">pcna</name>
</gene>
<dbReference type="EMBL" id="M34080">
    <property type="protein sequence ID" value="AAA49926.1"/>
    <property type="molecule type" value="mRNA"/>
</dbReference>
<dbReference type="PIR" id="A37357">
    <property type="entry name" value="A37357"/>
</dbReference>
<dbReference type="SMR" id="P18248"/>
<dbReference type="ComplexPortal" id="CPX-552">
    <property type="entry name" value="PCNA homotrimer"/>
</dbReference>
<dbReference type="ELM" id="P18248"/>
<dbReference type="AGR" id="Xenbase:XB-GENE-972527"/>
<dbReference type="Xenbase" id="XB-GENE-972527">
    <property type="gene designation" value="pcna.S"/>
</dbReference>
<dbReference type="CD-CODE" id="78E86D56">
    <property type="entry name" value="Mitochondrial cloud"/>
</dbReference>
<dbReference type="Proteomes" id="UP000186698">
    <property type="component" value="Unplaced"/>
</dbReference>
<dbReference type="GO" id="GO:0043626">
    <property type="term" value="C:PCNA complex"/>
    <property type="evidence" value="ECO:0000318"/>
    <property type="project" value="GO_Central"/>
</dbReference>
<dbReference type="GO" id="GO:0070557">
    <property type="term" value="C:PCNA-p21 complex"/>
    <property type="evidence" value="ECO:0000250"/>
    <property type="project" value="UniProtKB"/>
</dbReference>
<dbReference type="GO" id="GO:0003677">
    <property type="term" value="F:DNA binding"/>
    <property type="evidence" value="ECO:0007669"/>
    <property type="project" value="UniProtKB-KW"/>
</dbReference>
<dbReference type="GO" id="GO:0030337">
    <property type="term" value="F:DNA polymerase processivity factor activity"/>
    <property type="evidence" value="ECO:0000318"/>
    <property type="project" value="GO_Central"/>
</dbReference>
<dbReference type="GO" id="GO:0006974">
    <property type="term" value="P:DNA damage response"/>
    <property type="evidence" value="ECO:0000314"/>
    <property type="project" value="UniProtKB"/>
</dbReference>
<dbReference type="GO" id="GO:0006272">
    <property type="term" value="P:leading strand elongation"/>
    <property type="evidence" value="ECO:0000318"/>
    <property type="project" value="GO_Central"/>
</dbReference>
<dbReference type="GO" id="GO:0006298">
    <property type="term" value="P:mismatch repair"/>
    <property type="evidence" value="ECO:0000318"/>
    <property type="project" value="GO_Central"/>
</dbReference>
<dbReference type="GO" id="GO:0045732">
    <property type="term" value="P:positive regulation of protein catabolic process"/>
    <property type="evidence" value="ECO:0000314"/>
    <property type="project" value="UniProtKB"/>
</dbReference>
<dbReference type="GO" id="GO:0006275">
    <property type="term" value="P:regulation of DNA replication"/>
    <property type="evidence" value="ECO:0007669"/>
    <property type="project" value="InterPro"/>
</dbReference>
<dbReference type="GO" id="GO:0019985">
    <property type="term" value="P:translesion synthesis"/>
    <property type="evidence" value="ECO:0000250"/>
    <property type="project" value="UniProtKB"/>
</dbReference>
<dbReference type="CDD" id="cd00577">
    <property type="entry name" value="PCNA"/>
    <property type="match status" value="1"/>
</dbReference>
<dbReference type="FunFam" id="3.70.10.10:FF:000001">
    <property type="entry name" value="Proliferating cell nuclear antigen"/>
    <property type="match status" value="1"/>
</dbReference>
<dbReference type="Gene3D" id="3.70.10.10">
    <property type="match status" value="1"/>
</dbReference>
<dbReference type="HAMAP" id="MF_00317">
    <property type="entry name" value="DNApol_clamp_arch"/>
    <property type="match status" value="1"/>
</dbReference>
<dbReference type="InterPro" id="IPR046938">
    <property type="entry name" value="DNA_clamp_sf"/>
</dbReference>
<dbReference type="InterPro" id="IPR000730">
    <property type="entry name" value="Pr_cel_nuc_antig"/>
</dbReference>
<dbReference type="InterPro" id="IPR022649">
    <property type="entry name" value="Pr_cel_nuc_antig_C"/>
</dbReference>
<dbReference type="InterPro" id="IPR022659">
    <property type="entry name" value="Pr_cel_nuc_antig_CS"/>
</dbReference>
<dbReference type="InterPro" id="IPR022648">
    <property type="entry name" value="Pr_cel_nuc_antig_N"/>
</dbReference>
<dbReference type="NCBIfam" id="TIGR00590">
    <property type="entry name" value="pcna"/>
    <property type="match status" value="1"/>
</dbReference>
<dbReference type="PANTHER" id="PTHR11352">
    <property type="entry name" value="PROLIFERATING CELL NUCLEAR ANTIGEN"/>
    <property type="match status" value="1"/>
</dbReference>
<dbReference type="PANTHER" id="PTHR11352:SF0">
    <property type="entry name" value="PROLIFERATING CELL NUCLEAR ANTIGEN"/>
    <property type="match status" value="1"/>
</dbReference>
<dbReference type="Pfam" id="PF02747">
    <property type="entry name" value="PCNA_C"/>
    <property type="match status" value="1"/>
</dbReference>
<dbReference type="Pfam" id="PF00705">
    <property type="entry name" value="PCNA_N"/>
    <property type="match status" value="1"/>
</dbReference>
<dbReference type="PRINTS" id="PR00339">
    <property type="entry name" value="PCNACYCLIN"/>
</dbReference>
<dbReference type="SUPFAM" id="SSF55979">
    <property type="entry name" value="DNA clamp"/>
    <property type="match status" value="2"/>
</dbReference>
<dbReference type="PROSITE" id="PS01251">
    <property type="entry name" value="PCNA_1"/>
    <property type="match status" value="1"/>
</dbReference>
<dbReference type="PROSITE" id="PS00293">
    <property type="entry name" value="PCNA_2"/>
    <property type="match status" value="1"/>
</dbReference>
<comment type="function">
    <text evidence="6 7">This protein is an auxiliary protein of DNA polymerase delta and is involved in the control of eukaryotic DNA replication by increasing the polymerase's processibility during elongation of the leading strand. Promotes 3'-5' nuclease activity of the DNA-endonuclease apex2.L in response to DNA damage (PubMed:28028224, PubMed:29361157).</text>
</comment>
<comment type="subunit">
    <text evidence="1 2 5 7">Homotrimer. Forms a complex with activator 1 heteropentamer in the presence of ATP (By similarity). Component of the replisome complex (By similarity). Interacts with apex2.L (via PIP box and GRF-type Zinc finger domain); the interaction is required for 3'-5' single-strand break (SSB) end resection, assembly of a checkpoint protein complex to SSB sites, and SSB signaling (PubMed:23754435, PubMed:29361157).</text>
</comment>
<comment type="subcellular location">
    <subcellularLocation>
        <location evidence="4">Nucleus</location>
    </subcellularLocation>
</comment>
<comment type="PTM">
    <text evidence="1">Monoubiquitinated by the ube2b-rad18 complex on Lys-164. Monoubiquitination at Lys-164 also takes place in undamaged proliferating cells, and is mediated by the dcx(dtl) complex, leading to enhance PCNA-dependent translesion DNA synthesis (By similarity).</text>
</comment>
<comment type="similarity">
    <text evidence="8">Belongs to the PCNA family.</text>
</comment>
<sequence>MFEARLVQGSILKKVLEALKDLIDEACWDITSSGISLQSMDSSHVSLVQLTLRSDGFDTYRCDRNQSIGVKMSSMSKILKCAASDDIITLRAEDNADTVTMVFESPNQEKVSDYEMKLMDLDVEQLGIPEQEYSCVIKMPSGEFARICRDLSQIGDAVVISCAKDGVKFSASGELGTGNVKLSQTSNVDKEEEAVTIEMNEPVQLTFALRYLNFFTKATPLSPTVILSMSADIPLVVEYKIADMEHVKYYLAPKIEDEEAS</sequence>
<reference key="1">
    <citation type="journal article" date="1990" name="Dev. Biol.">
        <title>Characterization and developmental expression of Xenopus proliferating cell nuclear antigen (PCNA).</title>
        <authorList>
            <person name="Leibovici M."/>
            <person name="Gusse M."/>
            <person name="Bravo R."/>
            <person name="Mechali M."/>
        </authorList>
    </citation>
    <scope>NUCLEOTIDE SEQUENCE [MRNA]</scope>
    <scope>SUBCELLULAR LOCATION</scope>
</reference>
<reference key="2">
    <citation type="journal article" date="2013" name="Proc. Natl. Acad. Sci. U.S.A.">
        <title>APE2 is required for ATR-Chk1 checkpoint activation in response to oxidative stress.</title>
        <authorList>
            <person name="Willis J."/>
            <person name="Patel Y."/>
            <person name="Lentz B.L."/>
            <person name="Yan S."/>
        </authorList>
    </citation>
    <scope>INTERACTION WITH APEX2.L</scope>
</reference>
<reference key="3">
    <citation type="journal article" date="2017" name="Proc. Natl. Acad. Sci. U.S.A.">
        <title>APE2 Zf-GRF facilitates 3'-5' resection of DNA damage following oxidative stress.</title>
        <authorList>
            <person name="Wallace B.D."/>
            <person name="Berman Z."/>
            <person name="Mueller G.A."/>
            <person name="Lin Y."/>
            <person name="Chang T."/>
            <person name="Andres S.N."/>
            <person name="Wojtaszek J.L."/>
            <person name="DeRose E.F."/>
            <person name="Appel C.D."/>
            <person name="London R.E."/>
            <person name="Yan S."/>
            <person name="Williams R.S."/>
        </authorList>
    </citation>
    <scope>FUNCTION</scope>
</reference>
<reference key="4">
    <citation type="journal article" date="2018" name="Nucleic Acids Res.">
        <title>APE2 promotes DNA damage response pathway from a single-strand break.</title>
        <authorList>
            <person name="Lin Y."/>
            <person name="Bai L."/>
            <person name="Cupello S."/>
            <person name="Hossain M.A."/>
            <person name="Deem B."/>
            <person name="McLeod M."/>
            <person name="Raj J."/>
            <person name="Yan S."/>
        </authorList>
    </citation>
    <scope>FUNCTION</scope>
    <scope>INTERACTION WITH APEX2.L</scope>
    <scope>MUTAGENESIS OF 126-LEU--ILE-128 AND 253-PRO-LYS-254</scope>
</reference>
<feature type="chain" id="PRO_0000149167" description="Proliferating cell nuclear antigen">
    <location>
        <begin position="1"/>
        <end position="261"/>
    </location>
</feature>
<feature type="DNA-binding region" evidence="3">
    <location>
        <begin position="61"/>
        <end position="80"/>
    </location>
</feature>
<feature type="cross-link" description="Glycyl lysine isopeptide (Lys-Gly) (interchain with G-Cter in ubiquitin)" evidence="1">
    <location>
        <position position="164"/>
    </location>
</feature>
<feature type="mutagenesis site" description="Loss of interaction with apex2.L; when associated with 253-P-K-254." evidence="7">
    <original>LGI</original>
    <variation>AGA</variation>
    <location>
        <begin position="126"/>
        <end position="128"/>
    </location>
</feature>
<feature type="mutagenesis site" description="Reduced interaction with apex2.L. Loss of interaction with apex2.L; when associated with 126-L--I-128." evidence="7">
    <original>PK</original>
    <variation>AA</variation>
    <location>
        <begin position="253"/>
        <end position="254"/>
    </location>
</feature>
<name>PCNA_XENLA</name>
<proteinExistence type="evidence at protein level"/>
<protein>
    <recommendedName>
        <fullName>Proliferating cell nuclear antigen</fullName>
        <shortName>PCNA</shortName>
    </recommendedName>
    <alternativeName>
        <fullName>Cyclin</fullName>
    </alternativeName>
</protein>
<accession>P18248</accession>
<keyword id="KW-0235">DNA replication</keyword>
<keyword id="KW-0238">DNA-binding</keyword>
<keyword id="KW-1017">Isopeptide bond</keyword>
<keyword id="KW-0539">Nucleus</keyword>
<keyword id="KW-1185">Reference proteome</keyword>
<keyword id="KW-0832">Ubl conjugation</keyword>
<organism>
    <name type="scientific">Xenopus laevis</name>
    <name type="common">African clawed frog</name>
    <dbReference type="NCBI Taxonomy" id="8355"/>
    <lineage>
        <taxon>Eukaryota</taxon>
        <taxon>Metazoa</taxon>
        <taxon>Chordata</taxon>
        <taxon>Craniata</taxon>
        <taxon>Vertebrata</taxon>
        <taxon>Euteleostomi</taxon>
        <taxon>Amphibia</taxon>
        <taxon>Batrachia</taxon>
        <taxon>Anura</taxon>
        <taxon>Pipoidea</taxon>
        <taxon>Pipidae</taxon>
        <taxon>Xenopodinae</taxon>
        <taxon>Xenopus</taxon>
        <taxon>Xenopus</taxon>
    </lineage>
</organism>